<protein>
    <recommendedName>
        <fullName>Probable Xaa-Pro aminopeptidase MGYG_06974</fullName>
        <ecNumber>3.4.11.9</ecNumber>
    </recommendedName>
    <alternativeName>
        <fullName>Aminoacylproline aminopeptidase</fullName>
    </alternativeName>
    <alternativeName>
        <fullName>Prolidase</fullName>
    </alternativeName>
</protein>
<name>AMPP2_ARTGP</name>
<reference key="1">
    <citation type="journal article" date="2012" name="MBio">
        <title>Comparative genome analysis of Trichophyton rubrum and related dermatophytes reveals candidate genes involved in infection.</title>
        <authorList>
            <person name="Martinez D.A."/>
            <person name="Oliver B.G."/>
            <person name="Graeser Y."/>
            <person name="Goldberg J.M."/>
            <person name="Li W."/>
            <person name="Martinez-Rossi N.M."/>
            <person name="Monod M."/>
            <person name="Shelest E."/>
            <person name="Barton R.C."/>
            <person name="Birch E."/>
            <person name="Brakhage A.A."/>
            <person name="Chen Z."/>
            <person name="Gurr S.J."/>
            <person name="Heiman D."/>
            <person name="Heitman J."/>
            <person name="Kosti I."/>
            <person name="Rossi A."/>
            <person name="Saif S."/>
            <person name="Samalova M."/>
            <person name="Saunders C.W."/>
            <person name="Shea T."/>
            <person name="Summerbell R.C."/>
            <person name="Xu J."/>
            <person name="Young S."/>
            <person name="Zeng Q."/>
            <person name="Birren B.W."/>
            <person name="Cuomo C.A."/>
            <person name="White T.C."/>
        </authorList>
    </citation>
    <scope>NUCLEOTIDE SEQUENCE [LARGE SCALE GENOMIC DNA]</scope>
    <source>
        <strain>ATCC MYA-4604 / CBS 118893</strain>
    </source>
</reference>
<comment type="function">
    <text evidence="1">Catalyzes the removal of a penultimate prolyl residue from the N-termini of peptides.</text>
</comment>
<comment type="catalytic activity">
    <reaction>
        <text>Release of any N-terminal amino acid, including proline, that is linked to proline, even from a dipeptide or tripeptide.</text>
        <dbReference type="EC" id="3.4.11.9"/>
    </reaction>
</comment>
<comment type="cofactor">
    <cofactor evidence="1">
        <name>Mn(2+)</name>
        <dbReference type="ChEBI" id="CHEBI:29035"/>
    </cofactor>
    <text evidence="1">Binds 2 manganese ions per subunit.</text>
</comment>
<comment type="similarity">
    <text evidence="2">Belongs to the peptidase M24B family.</text>
</comment>
<keyword id="KW-0031">Aminopeptidase</keyword>
<keyword id="KW-0378">Hydrolase</keyword>
<keyword id="KW-0464">Manganese</keyword>
<keyword id="KW-0479">Metal-binding</keyword>
<keyword id="KW-0482">Metalloprotease</keyword>
<keyword id="KW-0645">Protease</keyword>
<keyword id="KW-1185">Reference proteome</keyword>
<organism>
    <name type="scientific">Arthroderma gypseum (strain ATCC MYA-4604 / CBS 118893)</name>
    <name type="common">Microsporum gypseum</name>
    <dbReference type="NCBI Taxonomy" id="535722"/>
    <lineage>
        <taxon>Eukaryota</taxon>
        <taxon>Fungi</taxon>
        <taxon>Dikarya</taxon>
        <taxon>Ascomycota</taxon>
        <taxon>Pezizomycotina</taxon>
        <taxon>Eurotiomycetes</taxon>
        <taxon>Eurotiomycetidae</taxon>
        <taxon>Onygenales</taxon>
        <taxon>Arthrodermataceae</taxon>
        <taxon>Nannizzia</taxon>
    </lineage>
</organism>
<proteinExistence type="inferred from homology"/>
<gene>
    <name type="ORF">MGYG_06974</name>
</gene>
<feature type="chain" id="PRO_0000411821" description="Probable Xaa-Pro aminopeptidase MGYG_06974">
    <location>
        <begin position="1"/>
        <end position="487"/>
    </location>
</feature>
<feature type="binding site" evidence="1">
    <location>
        <position position="255"/>
    </location>
    <ligand>
        <name>Mn(2+)</name>
        <dbReference type="ChEBI" id="CHEBI:29035"/>
        <label>2</label>
    </ligand>
</feature>
<feature type="binding site" evidence="1">
    <location>
        <position position="266"/>
    </location>
    <ligand>
        <name>Mn(2+)</name>
        <dbReference type="ChEBI" id="CHEBI:29035"/>
        <label>1</label>
    </ligand>
</feature>
<feature type="binding site" evidence="1">
    <location>
        <position position="266"/>
    </location>
    <ligand>
        <name>Mn(2+)</name>
        <dbReference type="ChEBI" id="CHEBI:29035"/>
        <label>2</label>
    </ligand>
</feature>
<feature type="binding site" evidence="1">
    <location>
        <position position="414"/>
    </location>
    <ligand>
        <name>Mn(2+)</name>
        <dbReference type="ChEBI" id="CHEBI:29035"/>
        <label>1</label>
    </ligand>
</feature>
<feature type="binding site" evidence="1">
    <location>
        <position position="458"/>
    </location>
    <ligand>
        <name>Mn(2+)</name>
        <dbReference type="ChEBI" id="CHEBI:29035"/>
        <label>1</label>
    </ligand>
</feature>
<feature type="binding site" evidence="1">
    <location>
        <position position="458"/>
    </location>
    <ligand>
        <name>Mn(2+)</name>
        <dbReference type="ChEBI" id="CHEBI:29035"/>
        <label>2</label>
    </ligand>
</feature>
<sequence length="487" mass="54153">MASYSIILSVGGTSINKYPGKQHARRVAAYLPKHQGLIYLPGQQTVLSEDSDQARPFKQRRYFFYVTGVVEPDCHVTYDIAEDKLTLYVPDFDFKRTIWTGPTLGKDEASQRHVEYYSSLEGDVQRWSQGNPSSPIYILHPDQRPVTPLTVAYLYESKSLKHAMDACRVIKDEHEVQLIQRANRVSGAAHRSILANLRHFKNEAQIAGLFIDVCLSLRSKGTAYETIAGSGSNGATLHYTRNNEPLAGRQMVVLDAGAEWSCYASDVTRSFPIPSSVRGGGDWPSREAEQIYTIVQRMQEECISRVKEGALFFSIHQHAHAVALEELLKLGILRIPRGSTKADLIKAEATALFFPHGLGHHLGLEVHDVSPDSGTIPLDLAIACQNGLMSVTEHRPPCTLSAPPLASGMVITVEPGLYFNRLAINQAREERDKPDSKGRFVNFDVVERYVDVGGVRIEDDVLVTKNGNRNLTDAPKGREMLDLIYGR</sequence>
<dbReference type="EC" id="3.4.11.9"/>
<dbReference type="EMBL" id="DS989827">
    <property type="protein sequence ID" value="EFR03972.1"/>
    <property type="molecule type" value="Genomic_DNA"/>
</dbReference>
<dbReference type="RefSeq" id="XP_003170980.1">
    <property type="nucleotide sequence ID" value="XM_003170932.1"/>
</dbReference>
<dbReference type="SMR" id="E4V1Q7"/>
<dbReference type="STRING" id="535722.E4V1Q7"/>
<dbReference type="GeneID" id="10026223"/>
<dbReference type="VEuPathDB" id="FungiDB:MGYG_06974"/>
<dbReference type="eggNOG" id="KOG2737">
    <property type="taxonomic scope" value="Eukaryota"/>
</dbReference>
<dbReference type="HOGENOM" id="CLU_017266_1_2_1"/>
<dbReference type="InParanoid" id="E4V1Q7"/>
<dbReference type="OMA" id="YELRMIR"/>
<dbReference type="OrthoDB" id="10261878at2759"/>
<dbReference type="Proteomes" id="UP000002669">
    <property type="component" value="Unassembled WGS sequence"/>
</dbReference>
<dbReference type="GO" id="GO:0030145">
    <property type="term" value="F:manganese ion binding"/>
    <property type="evidence" value="ECO:0007669"/>
    <property type="project" value="InterPro"/>
</dbReference>
<dbReference type="GO" id="GO:0070006">
    <property type="term" value="F:metalloaminopeptidase activity"/>
    <property type="evidence" value="ECO:0007669"/>
    <property type="project" value="InterPro"/>
</dbReference>
<dbReference type="GO" id="GO:0006508">
    <property type="term" value="P:proteolysis"/>
    <property type="evidence" value="ECO:0007669"/>
    <property type="project" value="UniProtKB-KW"/>
</dbReference>
<dbReference type="CDD" id="cd01087">
    <property type="entry name" value="Prolidase"/>
    <property type="match status" value="1"/>
</dbReference>
<dbReference type="Gene3D" id="3.90.230.10">
    <property type="entry name" value="Creatinase/methionine aminopeptidase superfamily"/>
    <property type="match status" value="1"/>
</dbReference>
<dbReference type="Gene3D" id="3.40.350.10">
    <property type="entry name" value="Creatinase/prolidase N-terminal domain"/>
    <property type="match status" value="1"/>
</dbReference>
<dbReference type="InterPro" id="IPR007865">
    <property type="entry name" value="Aminopep_P_N"/>
</dbReference>
<dbReference type="InterPro" id="IPR029149">
    <property type="entry name" value="Creatin/AminoP/Spt16_N"/>
</dbReference>
<dbReference type="InterPro" id="IPR036005">
    <property type="entry name" value="Creatinase/aminopeptidase-like"/>
</dbReference>
<dbReference type="InterPro" id="IPR000994">
    <property type="entry name" value="Pept_M24"/>
</dbReference>
<dbReference type="InterPro" id="IPR001131">
    <property type="entry name" value="Peptidase_M24B_aminopep-P_CS"/>
</dbReference>
<dbReference type="InterPro" id="IPR052433">
    <property type="entry name" value="X-Pro_dipept-like"/>
</dbReference>
<dbReference type="PANTHER" id="PTHR43226">
    <property type="entry name" value="XAA-PRO AMINOPEPTIDASE 3"/>
    <property type="match status" value="1"/>
</dbReference>
<dbReference type="PANTHER" id="PTHR43226:SF3">
    <property type="entry name" value="XAA-PRO AMINOPEPTIDASE AN0832-RELATED"/>
    <property type="match status" value="1"/>
</dbReference>
<dbReference type="Pfam" id="PF05195">
    <property type="entry name" value="AMP_N"/>
    <property type="match status" value="1"/>
</dbReference>
<dbReference type="Pfam" id="PF00557">
    <property type="entry name" value="Peptidase_M24"/>
    <property type="match status" value="1"/>
</dbReference>
<dbReference type="SMART" id="SM01011">
    <property type="entry name" value="AMP_N"/>
    <property type="match status" value="1"/>
</dbReference>
<dbReference type="SUPFAM" id="SSF55920">
    <property type="entry name" value="Creatinase/aminopeptidase"/>
    <property type="match status" value="1"/>
</dbReference>
<dbReference type="SUPFAM" id="SSF53092">
    <property type="entry name" value="Creatinase/prolidase N-terminal domain"/>
    <property type="match status" value="1"/>
</dbReference>
<dbReference type="PROSITE" id="PS00491">
    <property type="entry name" value="PROLINE_PEPTIDASE"/>
    <property type="match status" value="1"/>
</dbReference>
<evidence type="ECO:0000250" key="1"/>
<evidence type="ECO:0000305" key="2"/>
<accession>E4V1Q7</accession>